<sequence length="134" mass="15294">MRHRSGLRKLNRTSSHRQAMFRNMANSLLRHEVIKTTLPKAKELRRVVEPLITLGKKPSLSNRRLAFNRMRDREMVVKLFDVLGPRFAERNGGYLRILKFGFRDGDNAPLALIELLDRPDEGEEGANVSEAAAA</sequence>
<accession>Q5P306</accession>
<keyword id="KW-1185">Reference proteome</keyword>
<keyword id="KW-0687">Ribonucleoprotein</keyword>
<keyword id="KW-0689">Ribosomal protein</keyword>
<reference key="1">
    <citation type="journal article" date="2005" name="Arch. Microbiol.">
        <title>The genome sequence of an anaerobic aromatic-degrading denitrifying bacterium, strain EbN1.</title>
        <authorList>
            <person name="Rabus R."/>
            <person name="Kube M."/>
            <person name="Heider J."/>
            <person name="Beck A."/>
            <person name="Heitmann K."/>
            <person name="Widdel F."/>
            <person name="Reinhardt R."/>
        </authorList>
    </citation>
    <scope>NUCLEOTIDE SEQUENCE [LARGE SCALE GENOMIC DNA]</scope>
    <source>
        <strain>DSM 19018 / LMG 30748 / EbN1</strain>
    </source>
</reference>
<organism>
    <name type="scientific">Aromatoleum aromaticum (strain DSM 19018 / LMG 30748 / EbN1)</name>
    <name type="common">Azoarcus sp. (strain EbN1)</name>
    <dbReference type="NCBI Taxonomy" id="76114"/>
    <lineage>
        <taxon>Bacteria</taxon>
        <taxon>Pseudomonadati</taxon>
        <taxon>Pseudomonadota</taxon>
        <taxon>Betaproteobacteria</taxon>
        <taxon>Rhodocyclales</taxon>
        <taxon>Rhodocyclaceae</taxon>
        <taxon>Aromatoleum</taxon>
    </lineage>
</organism>
<name>RL17_AROAE</name>
<protein>
    <recommendedName>
        <fullName evidence="1">Large ribosomal subunit protein bL17</fullName>
    </recommendedName>
    <alternativeName>
        <fullName evidence="2">50S ribosomal protein L17</fullName>
    </alternativeName>
</protein>
<comment type="subunit">
    <text evidence="1">Part of the 50S ribosomal subunit. Contacts protein L32.</text>
</comment>
<comment type="similarity">
    <text evidence="1">Belongs to the bacterial ribosomal protein bL17 family.</text>
</comment>
<evidence type="ECO:0000255" key="1">
    <source>
        <dbReference type="HAMAP-Rule" id="MF_01368"/>
    </source>
</evidence>
<evidence type="ECO:0000305" key="2"/>
<proteinExistence type="inferred from homology"/>
<dbReference type="EMBL" id="CR555306">
    <property type="protein sequence ID" value="CAI08308.1"/>
    <property type="molecule type" value="Genomic_DNA"/>
</dbReference>
<dbReference type="RefSeq" id="WP_011237998.1">
    <property type="nucleotide sequence ID" value="NC_006513.1"/>
</dbReference>
<dbReference type="SMR" id="Q5P306"/>
<dbReference type="STRING" id="76114.ebB133"/>
<dbReference type="KEGG" id="eba:ebB133"/>
<dbReference type="eggNOG" id="COG0203">
    <property type="taxonomic scope" value="Bacteria"/>
</dbReference>
<dbReference type="HOGENOM" id="CLU_074407_2_0_4"/>
<dbReference type="OrthoDB" id="9809073at2"/>
<dbReference type="Proteomes" id="UP000006552">
    <property type="component" value="Chromosome"/>
</dbReference>
<dbReference type="GO" id="GO:0022625">
    <property type="term" value="C:cytosolic large ribosomal subunit"/>
    <property type="evidence" value="ECO:0007669"/>
    <property type="project" value="TreeGrafter"/>
</dbReference>
<dbReference type="GO" id="GO:0003735">
    <property type="term" value="F:structural constituent of ribosome"/>
    <property type="evidence" value="ECO:0007669"/>
    <property type="project" value="InterPro"/>
</dbReference>
<dbReference type="GO" id="GO:0006412">
    <property type="term" value="P:translation"/>
    <property type="evidence" value="ECO:0007669"/>
    <property type="project" value="UniProtKB-UniRule"/>
</dbReference>
<dbReference type="FunFam" id="3.90.1030.10:FF:000001">
    <property type="entry name" value="50S ribosomal protein L17"/>
    <property type="match status" value="1"/>
</dbReference>
<dbReference type="Gene3D" id="3.90.1030.10">
    <property type="entry name" value="Ribosomal protein L17"/>
    <property type="match status" value="1"/>
</dbReference>
<dbReference type="HAMAP" id="MF_01368">
    <property type="entry name" value="Ribosomal_bL17"/>
    <property type="match status" value="1"/>
</dbReference>
<dbReference type="InterPro" id="IPR000456">
    <property type="entry name" value="Ribosomal_bL17"/>
</dbReference>
<dbReference type="InterPro" id="IPR047859">
    <property type="entry name" value="Ribosomal_bL17_CS"/>
</dbReference>
<dbReference type="InterPro" id="IPR036373">
    <property type="entry name" value="Ribosomal_bL17_sf"/>
</dbReference>
<dbReference type="NCBIfam" id="TIGR00059">
    <property type="entry name" value="L17"/>
    <property type="match status" value="1"/>
</dbReference>
<dbReference type="PANTHER" id="PTHR14413:SF16">
    <property type="entry name" value="LARGE RIBOSOMAL SUBUNIT PROTEIN BL17M"/>
    <property type="match status" value="1"/>
</dbReference>
<dbReference type="PANTHER" id="PTHR14413">
    <property type="entry name" value="RIBOSOMAL PROTEIN L17"/>
    <property type="match status" value="1"/>
</dbReference>
<dbReference type="Pfam" id="PF01196">
    <property type="entry name" value="Ribosomal_L17"/>
    <property type="match status" value="1"/>
</dbReference>
<dbReference type="SUPFAM" id="SSF64263">
    <property type="entry name" value="Prokaryotic ribosomal protein L17"/>
    <property type="match status" value="1"/>
</dbReference>
<dbReference type="PROSITE" id="PS01167">
    <property type="entry name" value="RIBOSOMAL_L17"/>
    <property type="match status" value="1"/>
</dbReference>
<feature type="chain" id="PRO_0000267820" description="Large ribosomal subunit protein bL17">
    <location>
        <begin position="1"/>
        <end position="134"/>
    </location>
</feature>
<gene>
    <name evidence="1" type="primary">rplQ</name>
    <name type="ordered locus">AZOSEA21830</name>
    <name type="ORF">ebB133</name>
</gene>